<keyword id="KW-0687">Ribonucleoprotein</keyword>
<keyword id="KW-0689">Ribosomal protein</keyword>
<keyword id="KW-0694">RNA-binding</keyword>
<keyword id="KW-0699">rRNA-binding</keyword>
<evidence type="ECO:0000255" key="1">
    <source>
        <dbReference type="HAMAP-Rule" id="MF_01367"/>
    </source>
</evidence>
<evidence type="ECO:0000305" key="2"/>
<sequence>MIQQESRLKVADNSGAREVLVIKVLGGSGRRYANIGDVVVATVKEATPGGVVKKGQVVKAVVVRTKRGVRRSDGSYIRFDENACVIIRDDKSPRGTRIFGPVARELRDKDFMKIISLAPEVI</sequence>
<comment type="function">
    <text evidence="1">Binds to 23S rRNA. Forms part of two intersubunit bridges in the 70S ribosome.</text>
</comment>
<comment type="subunit">
    <text evidence="1">Part of the 50S ribosomal subunit. Forms a cluster with proteins L3 and L19. In the 70S ribosome, L14 and L19 interact and together make contacts with the 16S rRNA in bridges B5 and B8.</text>
</comment>
<comment type="similarity">
    <text evidence="1">Belongs to the universal ribosomal protein uL14 family.</text>
</comment>
<protein>
    <recommendedName>
        <fullName evidence="1">Large ribosomal subunit protein uL14</fullName>
    </recommendedName>
    <alternativeName>
        <fullName evidence="2">50S ribosomal protein L14</fullName>
    </alternativeName>
</protein>
<organism>
    <name type="scientific">Geobacillus sp. (strain WCH70)</name>
    <dbReference type="NCBI Taxonomy" id="471223"/>
    <lineage>
        <taxon>Bacteria</taxon>
        <taxon>Bacillati</taxon>
        <taxon>Bacillota</taxon>
        <taxon>Bacilli</taxon>
        <taxon>Bacillales</taxon>
        <taxon>Anoxybacillaceae</taxon>
        <taxon>Geobacillus</taxon>
    </lineage>
</organism>
<gene>
    <name evidence="1" type="primary">rplN</name>
    <name type="ordered locus">GWCH70_0121</name>
</gene>
<name>RL14_GEOSW</name>
<proteinExistence type="inferred from homology"/>
<feature type="chain" id="PRO_1000214982" description="Large ribosomal subunit protein uL14">
    <location>
        <begin position="1"/>
        <end position="122"/>
    </location>
</feature>
<reference key="1">
    <citation type="submission" date="2009-06" db="EMBL/GenBank/DDBJ databases">
        <title>Complete sequence of chromosome of Geopacillus sp. WCH70.</title>
        <authorList>
            <consortium name="US DOE Joint Genome Institute"/>
            <person name="Lucas S."/>
            <person name="Copeland A."/>
            <person name="Lapidus A."/>
            <person name="Glavina del Rio T."/>
            <person name="Dalin E."/>
            <person name="Tice H."/>
            <person name="Bruce D."/>
            <person name="Goodwin L."/>
            <person name="Pitluck S."/>
            <person name="Chertkov O."/>
            <person name="Brettin T."/>
            <person name="Detter J.C."/>
            <person name="Han C."/>
            <person name="Larimer F."/>
            <person name="Land M."/>
            <person name="Hauser L."/>
            <person name="Kyrpides N."/>
            <person name="Mikhailova N."/>
            <person name="Brumm P."/>
            <person name="Mead D.A."/>
            <person name="Richardson P."/>
        </authorList>
    </citation>
    <scope>NUCLEOTIDE SEQUENCE [LARGE SCALE GENOMIC DNA]</scope>
    <source>
        <strain>WCH70</strain>
    </source>
</reference>
<dbReference type="EMBL" id="CP001638">
    <property type="protein sequence ID" value="ACS23061.1"/>
    <property type="molecule type" value="Genomic_DNA"/>
</dbReference>
<dbReference type="SMR" id="C5D3S7"/>
<dbReference type="STRING" id="471223.GWCH70_0121"/>
<dbReference type="KEGG" id="gwc:GWCH70_0121"/>
<dbReference type="eggNOG" id="COG0093">
    <property type="taxonomic scope" value="Bacteria"/>
</dbReference>
<dbReference type="HOGENOM" id="CLU_095071_2_1_9"/>
<dbReference type="OrthoDB" id="9806379at2"/>
<dbReference type="GO" id="GO:0022625">
    <property type="term" value="C:cytosolic large ribosomal subunit"/>
    <property type="evidence" value="ECO:0007669"/>
    <property type="project" value="TreeGrafter"/>
</dbReference>
<dbReference type="GO" id="GO:0070180">
    <property type="term" value="F:large ribosomal subunit rRNA binding"/>
    <property type="evidence" value="ECO:0007669"/>
    <property type="project" value="TreeGrafter"/>
</dbReference>
<dbReference type="GO" id="GO:0003735">
    <property type="term" value="F:structural constituent of ribosome"/>
    <property type="evidence" value="ECO:0007669"/>
    <property type="project" value="InterPro"/>
</dbReference>
<dbReference type="GO" id="GO:0006412">
    <property type="term" value="P:translation"/>
    <property type="evidence" value="ECO:0007669"/>
    <property type="project" value="UniProtKB-UniRule"/>
</dbReference>
<dbReference type="CDD" id="cd00337">
    <property type="entry name" value="Ribosomal_uL14"/>
    <property type="match status" value="1"/>
</dbReference>
<dbReference type="FunFam" id="2.40.150.20:FF:000001">
    <property type="entry name" value="50S ribosomal protein L14"/>
    <property type="match status" value="1"/>
</dbReference>
<dbReference type="Gene3D" id="2.40.150.20">
    <property type="entry name" value="Ribosomal protein L14"/>
    <property type="match status" value="1"/>
</dbReference>
<dbReference type="HAMAP" id="MF_01367">
    <property type="entry name" value="Ribosomal_uL14"/>
    <property type="match status" value="1"/>
</dbReference>
<dbReference type="InterPro" id="IPR000218">
    <property type="entry name" value="Ribosomal_uL14"/>
</dbReference>
<dbReference type="InterPro" id="IPR005745">
    <property type="entry name" value="Ribosomal_uL14_bac-type"/>
</dbReference>
<dbReference type="InterPro" id="IPR019972">
    <property type="entry name" value="Ribosomal_uL14_CS"/>
</dbReference>
<dbReference type="InterPro" id="IPR036853">
    <property type="entry name" value="Ribosomal_uL14_sf"/>
</dbReference>
<dbReference type="NCBIfam" id="TIGR01067">
    <property type="entry name" value="rplN_bact"/>
    <property type="match status" value="1"/>
</dbReference>
<dbReference type="PANTHER" id="PTHR11761">
    <property type="entry name" value="50S/60S RIBOSOMAL PROTEIN L14/L23"/>
    <property type="match status" value="1"/>
</dbReference>
<dbReference type="PANTHER" id="PTHR11761:SF3">
    <property type="entry name" value="LARGE RIBOSOMAL SUBUNIT PROTEIN UL14M"/>
    <property type="match status" value="1"/>
</dbReference>
<dbReference type="Pfam" id="PF00238">
    <property type="entry name" value="Ribosomal_L14"/>
    <property type="match status" value="1"/>
</dbReference>
<dbReference type="SMART" id="SM01374">
    <property type="entry name" value="Ribosomal_L14"/>
    <property type="match status" value="1"/>
</dbReference>
<dbReference type="SUPFAM" id="SSF50193">
    <property type="entry name" value="Ribosomal protein L14"/>
    <property type="match status" value="1"/>
</dbReference>
<dbReference type="PROSITE" id="PS00049">
    <property type="entry name" value="RIBOSOMAL_L14"/>
    <property type="match status" value="1"/>
</dbReference>
<accession>C5D3S7</accession>